<keyword id="KW-0238">DNA-binding</keyword>
<keyword id="KW-0479">Metal-binding</keyword>
<keyword id="KW-0539">Nucleus</keyword>
<keyword id="KW-1185">Reference proteome</keyword>
<keyword id="KW-0677">Repeat</keyword>
<keyword id="KW-0804">Transcription</keyword>
<keyword id="KW-0805">Transcription regulation</keyword>
<keyword id="KW-0862">Zinc</keyword>
<keyword id="KW-0863">Zinc-finger</keyword>
<dbReference type="EMBL" id="BC109904">
    <property type="protein sequence ID" value="AAI09905.1"/>
    <property type="molecule type" value="mRNA"/>
</dbReference>
<dbReference type="RefSeq" id="NP_001033264.1">
    <property type="nucleotide sequence ID" value="NM_001038175.2"/>
</dbReference>
<dbReference type="FunCoup" id="Q32KV8">
    <property type="interactions" value="1257"/>
</dbReference>
<dbReference type="STRING" id="9913.ENSBTAP00000010078"/>
<dbReference type="PaxDb" id="9913-ENSBTAP00000010078"/>
<dbReference type="GeneID" id="538455"/>
<dbReference type="KEGG" id="bta:538455"/>
<dbReference type="CTD" id="84330"/>
<dbReference type="eggNOG" id="KOG1721">
    <property type="taxonomic scope" value="Eukaryota"/>
</dbReference>
<dbReference type="InParanoid" id="Q32KV8"/>
<dbReference type="OrthoDB" id="8730587at2759"/>
<dbReference type="Proteomes" id="UP000009136">
    <property type="component" value="Unplaced"/>
</dbReference>
<dbReference type="GO" id="GO:0005634">
    <property type="term" value="C:nucleus"/>
    <property type="evidence" value="ECO:0007669"/>
    <property type="project" value="UniProtKB-SubCell"/>
</dbReference>
<dbReference type="GO" id="GO:0003677">
    <property type="term" value="F:DNA binding"/>
    <property type="evidence" value="ECO:0007669"/>
    <property type="project" value="UniProtKB-KW"/>
</dbReference>
<dbReference type="GO" id="GO:0008270">
    <property type="term" value="F:zinc ion binding"/>
    <property type="evidence" value="ECO:0007669"/>
    <property type="project" value="UniProtKB-KW"/>
</dbReference>
<dbReference type="Gene3D" id="3.30.160.60">
    <property type="entry name" value="Classic Zinc Finger"/>
    <property type="match status" value="1"/>
</dbReference>
<dbReference type="InterPro" id="IPR039882">
    <property type="entry name" value="ZN414"/>
</dbReference>
<dbReference type="InterPro" id="IPR031799">
    <property type="entry name" value="Znf-C2H2_ribbon"/>
</dbReference>
<dbReference type="InterPro" id="IPR013087">
    <property type="entry name" value="Znf_C2H2_type"/>
</dbReference>
<dbReference type="PANTHER" id="PTHR21695">
    <property type="entry name" value="ZINC FINGER PROTEIN 414"/>
    <property type="match status" value="1"/>
</dbReference>
<dbReference type="PANTHER" id="PTHR21695:SF0">
    <property type="entry name" value="ZINC FINGER PROTEIN 414"/>
    <property type="match status" value="1"/>
</dbReference>
<dbReference type="Pfam" id="PF15909">
    <property type="entry name" value="zf-C2H2_8"/>
    <property type="match status" value="1"/>
</dbReference>
<dbReference type="SMART" id="SM00355">
    <property type="entry name" value="ZnF_C2H2"/>
    <property type="match status" value="4"/>
</dbReference>
<dbReference type="PROSITE" id="PS00028">
    <property type="entry name" value="ZINC_FINGER_C2H2_1"/>
    <property type="match status" value="2"/>
</dbReference>
<dbReference type="PROSITE" id="PS50157">
    <property type="entry name" value="ZINC_FINGER_C2H2_2"/>
    <property type="match status" value="2"/>
</dbReference>
<comment type="function">
    <text>May be involved in transcriptional regulation.</text>
</comment>
<comment type="subcellular location">
    <subcellularLocation>
        <location evidence="3">Nucleus</location>
    </subcellularLocation>
</comment>
<comment type="similarity">
    <text evidence="3">Belongs to the krueppel C2H2-type zinc-finger protein family.</text>
</comment>
<organism>
    <name type="scientific">Bos taurus</name>
    <name type="common">Bovine</name>
    <dbReference type="NCBI Taxonomy" id="9913"/>
    <lineage>
        <taxon>Eukaryota</taxon>
        <taxon>Metazoa</taxon>
        <taxon>Chordata</taxon>
        <taxon>Craniata</taxon>
        <taxon>Vertebrata</taxon>
        <taxon>Euteleostomi</taxon>
        <taxon>Mammalia</taxon>
        <taxon>Eutheria</taxon>
        <taxon>Laurasiatheria</taxon>
        <taxon>Artiodactyla</taxon>
        <taxon>Ruminantia</taxon>
        <taxon>Pecora</taxon>
        <taxon>Bovidae</taxon>
        <taxon>Bovinae</taxon>
        <taxon>Bos</taxon>
    </lineage>
</organism>
<reference key="1">
    <citation type="submission" date="2005-11" db="EMBL/GenBank/DDBJ databases">
        <authorList>
            <consortium name="NIH - Mammalian Gene Collection (MGC) project"/>
        </authorList>
    </citation>
    <scope>NUCLEOTIDE SEQUENCE [LARGE SCALE MRNA]</scope>
    <source>
        <strain>Crossbred X Angus</strain>
        <tissue>Liver</tissue>
    </source>
</reference>
<feature type="chain" id="PRO_0000242162" description="Zinc finger protein 414">
    <location>
        <begin position="1"/>
        <end position="391"/>
    </location>
</feature>
<feature type="zinc finger region" description="C2H2-type 1" evidence="1">
    <location>
        <begin position="109"/>
        <end position="133"/>
    </location>
</feature>
<feature type="zinc finger region" description="C2H2-type 2" evidence="1">
    <location>
        <begin position="145"/>
        <end position="169"/>
    </location>
</feature>
<feature type="zinc finger region" description="C2H2-type 3" evidence="1">
    <location>
        <begin position="176"/>
        <end position="201"/>
    </location>
</feature>
<feature type="zinc finger region" description="C2H2-type 4" evidence="1">
    <location>
        <begin position="326"/>
        <end position="348"/>
    </location>
</feature>
<feature type="region of interest" description="Disordered" evidence="2">
    <location>
        <begin position="1"/>
        <end position="110"/>
    </location>
</feature>
<feature type="region of interest" description="Disordered" evidence="2">
    <location>
        <begin position="201"/>
        <end position="243"/>
    </location>
</feature>
<feature type="region of interest" description="Disordered" evidence="2">
    <location>
        <begin position="274"/>
        <end position="312"/>
    </location>
</feature>
<feature type="region of interest" description="Disordered" evidence="2">
    <location>
        <begin position="344"/>
        <end position="391"/>
    </location>
</feature>
<feature type="compositionally biased region" description="Polar residues" evidence="2">
    <location>
        <begin position="84"/>
        <end position="93"/>
    </location>
</feature>
<feature type="compositionally biased region" description="Basic and acidic residues" evidence="2">
    <location>
        <begin position="214"/>
        <end position="226"/>
    </location>
</feature>
<feature type="compositionally biased region" description="Pro residues" evidence="2">
    <location>
        <begin position="227"/>
        <end position="236"/>
    </location>
</feature>
<feature type="compositionally biased region" description="Low complexity" evidence="2">
    <location>
        <begin position="274"/>
        <end position="286"/>
    </location>
</feature>
<feature type="compositionally biased region" description="Pro residues" evidence="2">
    <location>
        <begin position="353"/>
        <end position="372"/>
    </location>
</feature>
<name>ZN414_BOVIN</name>
<sequence>MDEEPSGPSLDMPATAEPSSSETDKGVSPVLAAIDKSSSMEEEPGPDRATTPPVWERGGPTGGTQQGASPAPDSGHSGPGHTLGPTSTVSGTSEDLRPTRRRPPPGKQIPCSSPGCCLSFPSVRDLAQHLRTHCPPKQSLEGKLFRCSALSCTETFPNMQELVAHGKLHYKPNRYFKCENCLLRIRTHRSLFKHLHVCAEHAQSPAPPPPPPALDRESPASERPPESDPAPAPGLPYPLLEPFTTPAPAPTGPFLPYLNPAPFGLSPPRLRPFLAAAPGPPASSAAVWKKSQGAGGSPRRPQGGSDAPSGHAAPSRIVWEHTRGRYSCMQCAFSTASRPAMTLHLEDHRPGGPAAPAPGQPRPDAPADPAPLAPKASPLLSEGECPVFSPL</sequence>
<evidence type="ECO:0000255" key="1">
    <source>
        <dbReference type="PROSITE-ProRule" id="PRU00042"/>
    </source>
</evidence>
<evidence type="ECO:0000256" key="2">
    <source>
        <dbReference type="SAM" id="MobiDB-lite"/>
    </source>
</evidence>
<evidence type="ECO:0000305" key="3"/>
<gene>
    <name type="primary">ZNF414</name>
</gene>
<protein>
    <recommendedName>
        <fullName>Zinc finger protein 414</fullName>
    </recommendedName>
</protein>
<proteinExistence type="evidence at transcript level"/>
<accession>Q32KV8</accession>